<feature type="chain" id="PRO_0000197872" description="Exodeoxyribonuclease 7 large subunit">
    <location>
        <begin position="1"/>
        <end position="444"/>
    </location>
</feature>
<organism>
    <name type="scientific">Rickettsia conorii (strain ATCC VR-613 / Malish 7)</name>
    <dbReference type="NCBI Taxonomy" id="272944"/>
    <lineage>
        <taxon>Bacteria</taxon>
        <taxon>Pseudomonadati</taxon>
        <taxon>Pseudomonadota</taxon>
        <taxon>Alphaproteobacteria</taxon>
        <taxon>Rickettsiales</taxon>
        <taxon>Rickettsiaceae</taxon>
        <taxon>Rickettsieae</taxon>
        <taxon>Rickettsia</taxon>
        <taxon>spotted fever group</taxon>
    </lineage>
</organism>
<gene>
    <name evidence="1" type="primary">xseA</name>
    <name type="ordered locus">RC1026</name>
</gene>
<accession>Q92GU6</accession>
<keyword id="KW-0963">Cytoplasm</keyword>
<keyword id="KW-0269">Exonuclease</keyword>
<keyword id="KW-0378">Hydrolase</keyword>
<keyword id="KW-0540">Nuclease</keyword>
<proteinExistence type="inferred from homology"/>
<protein>
    <recommendedName>
        <fullName evidence="1">Exodeoxyribonuclease 7 large subunit</fullName>
        <ecNumber evidence="1">3.1.11.6</ecNumber>
    </recommendedName>
    <alternativeName>
        <fullName evidence="1">Exodeoxyribonuclease VII large subunit</fullName>
        <shortName evidence="1">Exonuclease VII large subunit</shortName>
    </alternativeName>
</protein>
<sequence length="444" mass="49886">MLDNFIAHQATKEFSVSEISNKIKELLENNFGYIKVKGEISGLKIANSGHAYFNLKENTAILACTCWRPILAKITFPLNDGMEVVISGKLSSYAGNSRYQLSVDNLQPTGLGAMLQILNERKAKLEKEGLFNKIRIPIPFLPDKIGVITSITGAVIKDIIHRIRERFPTRIIIWPVSVQGENSGNEIAEAIEGFNNLEEVNKPRVIIVARGGGSIEDLWSFNDEILVRAAYNSKIPIISAVGHEVDYTLIDLAADKRAPTPTAAAEFAVPVRSILNNTLQSYEKILLNNTSRLIKYHEQNIVNYNKIHRYLSHYINNRQQLLDETGFNLLDALPCFIELQETKIKSFSKERVNPAKIINYKTLELTHQTAYLSKSANNTLKNFEYKLELNSTLLASLDYHNVLKRGFAIVKGETGNFLSSKMTAANEKIFNIKFSDGEIKVVRA</sequence>
<name>EX7L_RICCN</name>
<evidence type="ECO:0000255" key="1">
    <source>
        <dbReference type="HAMAP-Rule" id="MF_00378"/>
    </source>
</evidence>
<evidence type="ECO:0000305" key="2"/>
<reference key="1">
    <citation type="journal article" date="2001" name="Science">
        <title>Mechanisms of evolution in Rickettsia conorii and R. prowazekii.</title>
        <authorList>
            <person name="Ogata H."/>
            <person name="Audic S."/>
            <person name="Renesto-Audiffren P."/>
            <person name="Fournier P.-E."/>
            <person name="Barbe V."/>
            <person name="Samson D."/>
            <person name="Roux V."/>
            <person name="Cossart P."/>
            <person name="Weissenbach J."/>
            <person name="Claverie J.-M."/>
            <person name="Raoult D."/>
        </authorList>
    </citation>
    <scope>NUCLEOTIDE SEQUENCE [LARGE SCALE GENOMIC DNA]</scope>
    <source>
        <strain>ATCC VR-613 / Malish 7</strain>
    </source>
</reference>
<comment type="function">
    <text evidence="1">Bidirectionally degrades single-stranded DNA into large acid-insoluble oligonucleotides, which are then degraded further into small acid-soluble oligonucleotides.</text>
</comment>
<comment type="catalytic activity">
    <reaction evidence="1">
        <text>Exonucleolytic cleavage in either 5'- to 3'- or 3'- to 5'-direction to yield nucleoside 5'-phosphates.</text>
        <dbReference type="EC" id="3.1.11.6"/>
    </reaction>
</comment>
<comment type="subunit">
    <text evidence="1">Heterooligomer composed of large and small subunits.</text>
</comment>
<comment type="subcellular location">
    <subcellularLocation>
        <location evidence="1">Cytoplasm</location>
    </subcellularLocation>
</comment>
<comment type="similarity">
    <text evidence="1">Belongs to the XseA family.</text>
</comment>
<comment type="sequence caution" evidence="2">
    <conflict type="erroneous initiation">
        <sequence resource="EMBL-CDS" id="AAL03564"/>
    </conflict>
</comment>
<dbReference type="EC" id="3.1.11.6" evidence="1"/>
<dbReference type="EMBL" id="AE006914">
    <property type="protein sequence ID" value="AAL03564.1"/>
    <property type="status" value="ALT_INIT"/>
    <property type="molecule type" value="Genomic_DNA"/>
</dbReference>
<dbReference type="PIR" id="B97828">
    <property type="entry name" value="B97828"/>
</dbReference>
<dbReference type="RefSeq" id="WP_041471739.1">
    <property type="nucleotide sequence ID" value="NC_003103.1"/>
</dbReference>
<dbReference type="SMR" id="Q92GU6"/>
<dbReference type="GeneID" id="928173"/>
<dbReference type="KEGG" id="rco:RC1026"/>
<dbReference type="PATRIC" id="fig|272944.4.peg.1167"/>
<dbReference type="HOGENOM" id="CLU_023625_2_0_5"/>
<dbReference type="Proteomes" id="UP000000816">
    <property type="component" value="Chromosome"/>
</dbReference>
<dbReference type="GO" id="GO:0005737">
    <property type="term" value="C:cytoplasm"/>
    <property type="evidence" value="ECO:0007669"/>
    <property type="project" value="UniProtKB-SubCell"/>
</dbReference>
<dbReference type="GO" id="GO:0009318">
    <property type="term" value="C:exodeoxyribonuclease VII complex"/>
    <property type="evidence" value="ECO:0007669"/>
    <property type="project" value="InterPro"/>
</dbReference>
<dbReference type="GO" id="GO:0008855">
    <property type="term" value="F:exodeoxyribonuclease VII activity"/>
    <property type="evidence" value="ECO:0007669"/>
    <property type="project" value="UniProtKB-UniRule"/>
</dbReference>
<dbReference type="GO" id="GO:0003676">
    <property type="term" value="F:nucleic acid binding"/>
    <property type="evidence" value="ECO:0007669"/>
    <property type="project" value="InterPro"/>
</dbReference>
<dbReference type="GO" id="GO:0006308">
    <property type="term" value="P:DNA catabolic process"/>
    <property type="evidence" value="ECO:0007669"/>
    <property type="project" value="UniProtKB-UniRule"/>
</dbReference>
<dbReference type="CDD" id="cd04489">
    <property type="entry name" value="ExoVII_LU_OBF"/>
    <property type="match status" value="1"/>
</dbReference>
<dbReference type="HAMAP" id="MF_00378">
    <property type="entry name" value="Exonuc_7_L"/>
    <property type="match status" value="1"/>
</dbReference>
<dbReference type="InterPro" id="IPR003753">
    <property type="entry name" value="Exonuc_VII_L"/>
</dbReference>
<dbReference type="InterPro" id="IPR020579">
    <property type="entry name" value="Exonuc_VII_lsu_C"/>
</dbReference>
<dbReference type="InterPro" id="IPR025824">
    <property type="entry name" value="OB-fold_nuc-bd_dom"/>
</dbReference>
<dbReference type="NCBIfam" id="TIGR00237">
    <property type="entry name" value="xseA"/>
    <property type="match status" value="1"/>
</dbReference>
<dbReference type="PANTHER" id="PTHR30008">
    <property type="entry name" value="EXODEOXYRIBONUCLEASE 7 LARGE SUBUNIT"/>
    <property type="match status" value="1"/>
</dbReference>
<dbReference type="PANTHER" id="PTHR30008:SF0">
    <property type="entry name" value="EXODEOXYRIBONUCLEASE 7 LARGE SUBUNIT"/>
    <property type="match status" value="1"/>
</dbReference>
<dbReference type="Pfam" id="PF02601">
    <property type="entry name" value="Exonuc_VII_L"/>
    <property type="match status" value="1"/>
</dbReference>
<dbReference type="Pfam" id="PF13742">
    <property type="entry name" value="tRNA_anti_2"/>
    <property type="match status" value="1"/>
</dbReference>